<name>HUTU_SALNS</name>
<organism>
    <name type="scientific">Salmonella newport (strain SL254)</name>
    <dbReference type="NCBI Taxonomy" id="423368"/>
    <lineage>
        <taxon>Bacteria</taxon>
        <taxon>Pseudomonadati</taxon>
        <taxon>Pseudomonadota</taxon>
        <taxon>Gammaproteobacteria</taxon>
        <taxon>Enterobacterales</taxon>
        <taxon>Enterobacteriaceae</taxon>
        <taxon>Salmonella</taxon>
    </lineage>
</organism>
<comment type="function">
    <text evidence="1">Catalyzes the conversion of urocanate to 4-imidazolone-5-propionate.</text>
</comment>
<comment type="catalytic activity">
    <reaction evidence="1">
        <text>4-imidazolone-5-propanoate = trans-urocanate + H2O</text>
        <dbReference type="Rhea" id="RHEA:13101"/>
        <dbReference type="ChEBI" id="CHEBI:15377"/>
        <dbReference type="ChEBI" id="CHEBI:17771"/>
        <dbReference type="ChEBI" id="CHEBI:77893"/>
        <dbReference type="EC" id="4.2.1.49"/>
    </reaction>
</comment>
<comment type="cofactor">
    <cofactor evidence="1">
        <name>NAD(+)</name>
        <dbReference type="ChEBI" id="CHEBI:57540"/>
    </cofactor>
    <text evidence="1">Binds 1 NAD(+) per subunit.</text>
</comment>
<comment type="pathway">
    <text evidence="1">Amino-acid degradation; L-histidine degradation into L-glutamate; N-formimidoyl-L-glutamate from L-histidine: step 2/3.</text>
</comment>
<comment type="subcellular location">
    <subcellularLocation>
        <location evidence="1">Cytoplasm</location>
    </subcellularLocation>
</comment>
<comment type="similarity">
    <text evidence="1">Belongs to the urocanase family.</text>
</comment>
<protein>
    <recommendedName>
        <fullName evidence="1">Urocanate hydratase</fullName>
        <shortName evidence="1">Urocanase</shortName>
        <ecNumber evidence="1">4.2.1.49</ecNumber>
    </recommendedName>
    <alternativeName>
        <fullName evidence="1">Imidazolonepropionate hydrolase</fullName>
    </alternativeName>
</protein>
<gene>
    <name evidence="1" type="primary">hutU</name>
    <name type="ordered locus">SNSL254_A0854</name>
</gene>
<feature type="chain" id="PRO_1000129574" description="Urocanate hydratase">
    <location>
        <begin position="1"/>
        <end position="561"/>
    </location>
</feature>
<feature type="active site" evidence="1">
    <location>
        <position position="410"/>
    </location>
</feature>
<feature type="binding site" evidence="1">
    <location>
        <begin position="52"/>
        <end position="53"/>
    </location>
    <ligand>
        <name>NAD(+)</name>
        <dbReference type="ChEBI" id="CHEBI:57540"/>
    </ligand>
</feature>
<feature type="binding site" evidence="1">
    <location>
        <position position="130"/>
    </location>
    <ligand>
        <name>NAD(+)</name>
        <dbReference type="ChEBI" id="CHEBI:57540"/>
    </ligand>
</feature>
<feature type="binding site" evidence="1">
    <location>
        <begin position="176"/>
        <end position="178"/>
    </location>
    <ligand>
        <name>NAD(+)</name>
        <dbReference type="ChEBI" id="CHEBI:57540"/>
    </ligand>
</feature>
<feature type="binding site" evidence="1">
    <location>
        <position position="196"/>
    </location>
    <ligand>
        <name>NAD(+)</name>
        <dbReference type="ChEBI" id="CHEBI:57540"/>
    </ligand>
</feature>
<feature type="binding site" evidence="1">
    <location>
        <position position="201"/>
    </location>
    <ligand>
        <name>NAD(+)</name>
        <dbReference type="ChEBI" id="CHEBI:57540"/>
    </ligand>
</feature>
<feature type="binding site" evidence="1">
    <location>
        <begin position="242"/>
        <end position="243"/>
    </location>
    <ligand>
        <name>NAD(+)</name>
        <dbReference type="ChEBI" id="CHEBI:57540"/>
    </ligand>
</feature>
<feature type="binding site" evidence="1">
    <location>
        <begin position="263"/>
        <end position="267"/>
    </location>
    <ligand>
        <name>NAD(+)</name>
        <dbReference type="ChEBI" id="CHEBI:57540"/>
    </ligand>
</feature>
<feature type="binding site" evidence="1">
    <location>
        <begin position="273"/>
        <end position="274"/>
    </location>
    <ligand>
        <name>NAD(+)</name>
        <dbReference type="ChEBI" id="CHEBI:57540"/>
    </ligand>
</feature>
<feature type="binding site" evidence="1">
    <location>
        <position position="322"/>
    </location>
    <ligand>
        <name>NAD(+)</name>
        <dbReference type="ChEBI" id="CHEBI:57540"/>
    </ligand>
</feature>
<feature type="binding site" evidence="1">
    <location>
        <position position="492"/>
    </location>
    <ligand>
        <name>NAD(+)</name>
        <dbReference type="ChEBI" id="CHEBI:57540"/>
    </ligand>
</feature>
<proteinExistence type="inferred from homology"/>
<accession>B4SZJ3</accession>
<reference key="1">
    <citation type="journal article" date="2011" name="J. Bacteriol.">
        <title>Comparative genomics of 28 Salmonella enterica isolates: evidence for CRISPR-mediated adaptive sublineage evolution.</title>
        <authorList>
            <person name="Fricke W.F."/>
            <person name="Mammel M.K."/>
            <person name="McDermott P.F."/>
            <person name="Tartera C."/>
            <person name="White D.G."/>
            <person name="Leclerc J.E."/>
            <person name="Ravel J."/>
            <person name="Cebula T.A."/>
        </authorList>
    </citation>
    <scope>NUCLEOTIDE SEQUENCE [LARGE SCALE GENOMIC DNA]</scope>
    <source>
        <strain>SL254</strain>
    </source>
</reference>
<keyword id="KW-0963">Cytoplasm</keyword>
<keyword id="KW-0369">Histidine metabolism</keyword>
<keyword id="KW-0456">Lyase</keyword>
<keyword id="KW-0520">NAD</keyword>
<dbReference type="EC" id="4.2.1.49" evidence="1"/>
<dbReference type="EMBL" id="CP001113">
    <property type="protein sequence ID" value="ACF64377.1"/>
    <property type="molecule type" value="Genomic_DNA"/>
</dbReference>
<dbReference type="RefSeq" id="WP_001115210.1">
    <property type="nucleotide sequence ID" value="NZ_CCMR01000003.1"/>
</dbReference>
<dbReference type="SMR" id="B4SZJ3"/>
<dbReference type="KEGG" id="see:SNSL254_A0854"/>
<dbReference type="HOGENOM" id="CLU_018868_0_1_6"/>
<dbReference type="UniPathway" id="UPA00379">
    <property type="reaction ID" value="UER00550"/>
</dbReference>
<dbReference type="Proteomes" id="UP000008824">
    <property type="component" value="Chromosome"/>
</dbReference>
<dbReference type="GO" id="GO:0005737">
    <property type="term" value="C:cytoplasm"/>
    <property type="evidence" value="ECO:0007669"/>
    <property type="project" value="UniProtKB-SubCell"/>
</dbReference>
<dbReference type="GO" id="GO:0016153">
    <property type="term" value="F:urocanate hydratase activity"/>
    <property type="evidence" value="ECO:0007669"/>
    <property type="project" value="UniProtKB-UniRule"/>
</dbReference>
<dbReference type="GO" id="GO:0019556">
    <property type="term" value="P:L-histidine catabolic process to glutamate and formamide"/>
    <property type="evidence" value="ECO:0007669"/>
    <property type="project" value="UniProtKB-UniPathway"/>
</dbReference>
<dbReference type="GO" id="GO:0019557">
    <property type="term" value="P:L-histidine catabolic process to glutamate and formate"/>
    <property type="evidence" value="ECO:0007669"/>
    <property type="project" value="UniProtKB-UniPathway"/>
</dbReference>
<dbReference type="FunFam" id="3.40.50.10730:FF:000001">
    <property type="entry name" value="Urocanate hydratase"/>
    <property type="match status" value="1"/>
</dbReference>
<dbReference type="Gene3D" id="3.40.50.10730">
    <property type="entry name" value="Urocanase like domains"/>
    <property type="match status" value="1"/>
</dbReference>
<dbReference type="Gene3D" id="3.40.1770.10">
    <property type="entry name" value="Urocanase superfamily"/>
    <property type="match status" value="1"/>
</dbReference>
<dbReference type="HAMAP" id="MF_00577">
    <property type="entry name" value="HutU"/>
    <property type="match status" value="1"/>
</dbReference>
<dbReference type="InterPro" id="IPR055351">
    <property type="entry name" value="Urocanase"/>
</dbReference>
<dbReference type="InterPro" id="IPR023637">
    <property type="entry name" value="Urocanase-like"/>
</dbReference>
<dbReference type="InterPro" id="IPR035401">
    <property type="entry name" value="Urocanase_C"/>
</dbReference>
<dbReference type="InterPro" id="IPR038364">
    <property type="entry name" value="Urocanase_central_sf"/>
</dbReference>
<dbReference type="InterPro" id="IPR023636">
    <property type="entry name" value="Urocanase_CS"/>
</dbReference>
<dbReference type="InterPro" id="IPR035400">
    <property type="entry name" value="Urocanase_N"/>
</dbReference>
<dbReference type="InterPro" id="IPR035085">
    <property type="entry name" value="Urocanase_Rossmann-like"/>
</dbReference>
<dbReference type="InterPro" id="IPR036190">
    <property type="entry name" value="Urocanase_sf"/>
</dbReference>
<dbReference type="NCBIfam" id="TIGR01228">
    <property type="entry name" value="hutU"/>
    <property type="match status" value="1"/>
</dbReference>
<dbReference type="NCBIfam" id="NF003820">
    <property type="entry name" value="PRK05414.1"/>
    <property type="match status" value="1"/>
</dbReference>
<dbReference type="PANTHER" id="PTHR12216">
    <property type="entry name" value="UROCANATE HYDRATASE"/>
    <property type="match status" value="1"/>
</dbReference>
<dbReference type="PANTHER" id="PTHR12216:SF4">
    <property type="entry name" value="UROCANATE HYDRATASE"/>
    <property type="match status" value="1"/>
</dbReference>
<dbReference type="Pfam" id="PF01175">
    <property type="entry name" value="Urocanase"/>
    <property type="match status" value="1"/>
</dbReference>
<dbReference type="Pfam" id="PF17392">
    <property type="entry name" value="Urocanase_C"/>
    <property type="match status" value="1"/>
</dbReference>
<dbReference type="Pfam" id="PF17391">
    <property type="entry name" value="Urocanase_N"/>
    <property type="match status" value="1"/>
</dbReference>
<dbReference type="PIRSF" id="PIRSF001423">
    <property type="entry name" value="Urocanate_hydrat"/>
    <property type="match status" value="1"/>
</dbReference>
<dbReference type="SUPFAM" id="SSF111326">
    <property type="entry name" value="Urocanase"/>
    <property type="match status" value="1"/>
</dbReference>
<dbReference type="PROSITE" id="PS01233">
    <property type="entry name" value="UROCANASE"/>
    <property type="match status" value="1"/>
</dbReference>
<evidence type="ECO:0000255" key="1">
    <source>
        <dbReference type="HAMAP-Rule" id="MF_00577"/>
    </source>
</evidence>
<sequence>MPESKYRQQTIRAPRGTVLTAKSWLTEAPLRMLMNNLDPDVAENPHELVVYGGIGRAARNWECYDAIVDALTRLEADETLLIQSGKPVGVFKTHDNAPRVLIANSNLVPHWATWEHFNELDAKGLAMYGQMTAGSWIYIGSQGIVQGTYETFVEAGRQHYNGTLAGRWVLTAGLGGMGGAQPLAATLAGACSLTIECQQSRIDFRLRTRYVDEQAATLDDALARITRYTREGKAVSVALCANAADILPELVNRGVRPDLVTDQTSAHDPLHGYLPSGWRWEEYQKNAQSDPHGTMQAAKRSMAAHVRAMLAFSKMGVPTFDYGNNIRQMAKEMGVENAFDFPGFVPAYIRPLFCRGIGPFRWVALSGDPQDIYKTDAKVKEIVAEDKHLHHWLDMARERIHFQGLPARICWVGLEWRQKLGLAFNEMVRCGEVSAPIVIGRDHLDSGSVASPNRETEAMRDGSDAVSDWPLLNALLNTASGATWVSLHHGGGVGMGFSQHAGMVIVCDGTDEAAARIRRVLHNDPATGVMRHADAGYDLAVECSVEQGLNLPMVAATQGKG</sequence>